<dbReference type="GO" id="GO:0005576">
    <property type="term" value="C:extracellular region"/>
    <property type="evidence" value="ECO:0007669"/>
    <property type="project" value="UniProtKB-SubCell"/>
</dbReference>
<dbReference type="GO" id="GO:0006952">
    <property type="term" value="P:defense response"/>
    <property type="evidence" value="ECO:0007669"/>
    <property type="project" value="UniProtKB-KW"/>
</dbReference>
<keyword id="KW-0878">Amphibian defense peptide</keyword>
<keyword id="KW-0929">Antimicrobial</keyword>
<keyword id="KW-0903">Direct protein sequencing</keyword>
<keyword id="KW-0964">Secreted</keyword>
<comment type="function">
    <text evidence="1">Antimicrobial peptide.</text>
</comment>
<comment type="subcellular location">
    <subcellularLocation>
        <location evidence="2">Secreted</location>
    </subcellularLocation>
</comment>
<comment type="tissue specificity">
    <text evidence="5">Expressed by the skin glands.</text>
</comment>
<comment type="mass spectrometry"/>
<comment type="similarity">
    <text evidence="4">Belongs to the gastrin/cholecystokinin family. Magainin subfamily.</text>
</comment>
<evidence type="ECO:0000250" key="1">
    <source>
        <dbReference type="UniProtKB" id="C0HK86"/>
    </source>
</evidence>
<evidence type="ECO:0000269" key="2">
    <source>
    </source>
</evidence>
<evidence type="ECO:0000303" key="3">
    <source>
    </source>
</evidence>
<evidence type="ECO:0000305" key="4"/>
<evidence type="ECO:0000305" key="5">
    <source>
    </source>
</evidence>
<reference evidence="4" key="1">
    <citation type="journal article" date="2016" name="Comp. Biochem. Physiol.">
        <title>Peptidomic analysis of the extensive array of host-defense peptides in skin secretions of the dodecaploid frog Xenopus ruwenzoriensis (Pipidae).</title>
        <authorList>
            <person name="Coquet L."/>
            <person name="Kolodziejek J."/>
            <person name="Jouenne T."/>
            <person name="Nowotny N."/>
            <person name="King J.D."/>
            <person name="Conlon J.M."/>
        </authorList>
    </citation>
    <scope>PROTEIN SEQUENCE</scope>
    <scope>SUBCELLULAR LOCATION</scope>
    <scope>MASS SPECTROMETRY</scope>
    <source>
        <tissue evidence="3">Skin secretion</tissue>
    </source>
</reference>
<organism evidence="3">
    <name type="scientific">Xenopus ruwenzoriensis</name>
    <name type="common">Uganda clawed frog</name>
    <dbReference type="NCBI Taxonomy" id="105430"/>
    <lineage>
        <taxon>Eukaryota</taxon>
        <taxon>Metazoa</taxon>
        <taxon>Chordata</taxon>
        <taxon>Craniata</taxon>
        <taxon>Vertebrata</taxon>
        <taxon>Euteleostomi</taxon>
        <taxon>Amphibia</taxon>
        <taxon>Batrachia</taxon>
        <taxon>Anura</taxon>
        <taxon>Pipoidea</taxon>
        <taxon>Pipidae</taxon>
        <taxon>Xenopodinae</taxon>
        <taxon>Xenopus</taxon>
        <taxon>Xenopus</taxon>
    </lineage>
</organism>
<protein>
    <recommendedName>
        <fullName evidence="3">Xenoposin precursor fragment R2</fullName>
    </recommendedName>
    <alternativeName>
        <fullName evidence="3">XPF-R2</fullName>
    </alternativeName>
</protein>
<sequence>GWASKIGQTLGKMAKVGLQELIQPK</sequence>
<proteinExistence type="evidence at protein level"/>
<name>XPFR2_XENRU</name>
<accession>C0HKP6</accession>
<feature type="peptide" id="PRO_0000440933" description="Xenoposin precursor fragment R2" evidence="2">
    <location>
        <begin position="1"/>
        <end position="25"/>
    </location>
</feature>